<proteinExistence type="evidence at protein level"/>
<keyword id="KW-1003">Cell membrane</keyword>
<keyword id="KW-1015">Disulfide bond</keyword>
<keyword id="KW-0245">EGF-like domain</keyword>
<keyword id="KW-0325">Glycoprotein</keyword>
<keyword id="KW-0339">Growth factor</keyword>
<keyword id="KW-0449">Lipoprotein</keyword>
<keyword id="KW-0472">Membrane</keyword>
<keyword id="KW-0497">Mitogen</keyword>
<keyword id="KW-0564">Palmitate</keyword>
<keyword id="KW-1185">Reference proteome</keyword>
<keyword id="KW-0964">Secreted</keyword>
<keyword id="KW-0732">Signal</keyword>
<keyword id="KW-0812">Transmembrane</keyword>
<keyword id="KW-1133">Transmembrane helix</keyword>
<gene>
    <name type="primary">Tgfa</name>
</gene>
<feature type="signal peptide" evidence="2">
    <location>
        <begin position="1"/>
        <end position="23"/>
    </location>
</feature>
<feature type="chain" id="PRO_0000302746" description="Protransforming growth factor alpha">
    <location>
        <begin position="24"/>
        <end position="159"/>
    </location>
</feature>
<feature type="propeptide" id="PRO_0000007758" description="Removed in mature form">
    <location>
        <begin position="24"/>
        <end position="38"/>
    </location>
</feature>
<feature type="chain" id="PRO_0000007759" description="Transforming growth factor alpha">
    <location>
        <begin position="39"/>
        <end position="88"/>
    </location>
</feature>
<feature type="propeptide" id="PRO_0000007760" description="Removed in mature form">
    <location>
        <begin position="89"/>
        <end position="159"/>
    </location>
</feature>
<feature type="topological domain" description="Extracellular" evidence="2">
    <location>
        <begin position="24"/>
        <end position="97"/>
    </location>
</feature>
<feature type="transmembrane region" description="Helical" evidence="2">
    <location>
        <begin position="98"/>
        <end position="123"/>
    </location>
</feature>
<feature type="topological domain" description="Cytoplasmic" evidence="2">
    <location>
        <begin position="124"/>
        <end position="159"/>
    </location>
</feature>
<feature type="domain" description="EGF-like" evidence="3">
    <location>
        <begin position="44"/>
        <end position="83"/>
    </location>
</feature>
<feature type="lipid moiety-binding region" description="S-palmitoyl cysteine" evidence="1">
    <location>
        <position position="152"/>
    </location>
</feature>
<feature type="lipid moiety-binding region" description="S-palmitoyl cysteine" evidence="1">
    <location>
        <position position="153"/>
    </location>
</feature>
<feature type="glycosylation site" description="N-linked (GlcNAc...) asparagine" evidence="2">
    <location>
        <position position="25"/>
    </location>
</feature>
<feature type="disulfide bond" evidence="3">
    <location>
        <begin position="46"/>
        <end position="59"/>
    </location>
</feature>
<feature type="disulfide bond" evidence="3">
    <location>
        <begin position="54"/>
        <end position="70"/>
    </location>
</feature>
<feature type="disulfide bond" evidence="3">
    <location>
        <begin position="72"/>
        <end position="81"/>
    </location>
</feature>
<comment type="function">
    <text>TGF alpha is a mitogenic polypeptide that is able to bind to the EGF receptor/EGFR and to act synergistically with TGF beta to promote anchorage-independent cell proliferation in soft agar.</text>
</comment>
<comment type="subunit">
    <text evidence="1 4">Interacts with the PDZ domains of SDCBP and SNTA1. The interaction with SDCBP, is required for the targeting to the cell surface. In the endoplasmic reticulum, in its immature form (i.e. with a prosegment and lacking full N-glycosylation), interacts with CNIH. In the Golgi apparatus, may form a complex with CNIH and GORASP2. Interacts (via cytoplasmic C-terminal domain) with NKD2 (By similarity). Interacts with MAGI3.</text>
</comment>
<comment type="subcellular location">
    <molecule>Transforming growth factor alpha</molecule>
    <subcellularLocation>
        <location>Secreted</location>
        <location>Extracellular space</location>
    </subcellularLocation>
</comment>
<comment type="subcellular location">
    <molecule>Protransforming growth factor alpha</molecule>
    <subcellularLocation>
        <location>Cell membrane</location>
        <topology>Single-pass type I membrane protein</topology>
    </subcellularLocation>
</comment>
<sequence>MVPATGQLALLALGILLAVCQALENSTSPLSDSPVAAAVVSHFNKCPDSHTQYCFHGTCRFLVQEEKPACVCHSGYVGVRCEHADLLAVVAASQKKQAITALVVVSIVALAVLIITCVLIHCCQLRKHCEWCRALVCRHEKPSALLKGRTACCHSETVV</sequence>
<accession>P48030</accession>
<reference key="1">
    <citation type="journal article" date="1992" name="Biochim. Biophys. Acta">
        <title>Nucleotide sequence and tissue distribution of mouse transforming growth factor-alpha.</title>
        <authorList>
            <person name="Vaughan T.J."/>
            <person name="Pascall J.C."/>
            <person name="Brown K.D."/>
        </authorList>
    </citation>
    <scope>NUCLEOTIDE SEQUENCE [MRNA]</scope>
</reference>
<reference key="2">
    <citation type="journal article" date="1996" name="Cell Growth Differ.">
        <title>Characterization of the mouse transforming growth factor alpha gene: its expression during eyelid development and in waved 1 tissues.</title>
        <authorList>
            <person name="Berkowitz E.A."/>
            <person name="Seroogy K.B."/>
            <person name="Schroeder J.A."/>
            <person name="Russell W.E."/>
            <person name="Evans E.P."/>
            <person name="Riedel R.F."/>
            <person name="Phillips H.K."/>
            <person name="Harrison C.A."/>
            <person name="Lee D.C."/>
            <person name="Luetteke N.C."/>
        </authorList>
    </citation>
    <scope>NUCLEOTIDE SEQUENCE [GENOMIC DNA / MRNA]</scope>
    <source>
        <strain>129/Sv</strain>
        <tissue>Brain</tissue>
    </source>
</reference>
<reference key="3">
    <citation type="journal article" date="2005" name="Exp. Cell Res.">
        <title>Identification of MAGI-3 as a transforming growth factor-alpha tail binding protein.</title>
        <authorList>
            <person name="Franklin J.L."/>
            <person name="Yoshiura K."/>
            <person name="Dempsey P.J."/>
            <person name="Bogatcheva G."/>
            <person name="Jeyakumar L."/>
            <person name="Meise K.S."/>
            <person name="Pearsall R.S."/>
            <person name="Threadgill D."/>
            <person name="Coffey R.J."/>
        </authorList>
    </citation>
    <scope>INTERACTION WITH MAGI3</scope>
</reference>
<name>TGFA_MOUSE</name>
<protein>
    <recommendedName>
        <fullName>Protransforming growth factor alpha</fullName>
    </recommendedName>
    <component>
        <recommendedName>
            <fullName>Transforming growth factor alpha</fullName>
            <shortName>TGF-alpha</shortName>
        </recommendedName>
        <alternativeName>
            <fullName>EGF-like TGF</fullName>
            <shortName>ETGF</shortName>
        </alternativeName>
        <alternativeName>
            <fullName>TGF type 1</fullName>
        </alternativeName>
    </component>
</protein>
<dbReference type="EMBL" id="M92420">
    <property type="protein sequence ID" value="AAA40481.1"/>
    <property type="molecule type" value="mRNA"/>
</dbReference>
<dbReference type="EMBL" id="U65016">
    <property type="protein sequence ID" value="AAB50554.1"/>
    <property type="molecule type" value="mRNA"/>
</dbReference>
<dbReference type="EMBL" id="U64873">
    <property type="protein sequence ID" value="AAB50553.1"/>
    <property type="molecule type" value="Genomic_DNA"/>
</dbReference>
<dbReference type="CCDS" id="CCDS51832.1"/>
<dbReference type="PIR" id="S27195">
    <property type="entry name" value="S27195"/>
</dbReference>
<dbReference type="RefSeq" id="NP_112476.1">
    <property type="nucleotide sequence ID" value="NM_031199.5"/>
</dbReference>
<dbReference type="SMR" id="P48030"/>
<dbReference type="FunCoup" id="P48030">
    <property type="interactions" value="1079"/>
</dbReference>
<dbReference type="IntAct" id="P48030">
    <property type="interactions" value="1"/>
</dbReference>
<dbReference type="MINT" id="P48030"/>
<dbReference type="STRING" id="10090.ENSMUSP00000032066"/>
<dbReference type="GlyCosmos" id="P48030">
    <property type="glycosylation" value="1 site, No reported glycans"/>
</dbReference>
<dbReference type="GlyGen" id="P48030">
    <property type="glycosylation" value="1 site"/>
</dbReference>
<dbReference type="PaxDb" id="10090-ENSMUSP00000032066"/>
<dbReference type="ProteomicsDB" id="259019"/>
<dbReference type="Antibodypedia" id="16331">
    <property type="antibodies" value="1413 antibodies from 39 providers"/>
</dbReference>
<dbReference type="DNASU" id="21802"/>
<dbReference type="Ensembl" id="ENSMUST00000032066.13">
    <property type="protein sequence ID" value="ENSMUSP00000032066.10"/>
    <property type="gene ID" value="ENSMUSG00000029999.15"/>
</dbReference>
<dbReference type="GeneID" id="21802"/>
<dbReference type="KEGG" id="mmu:21802"/>
<dbReference type="UCSC" id="uc009crk.2">
    <property type="organism name" value="mouse"/>
</dbReference>
<dbReference type="AGR" id="MGI:98724"/>
<dbReference type="CTD" id="7039"/>
<dbReference type="MGI" id="MGI:98724">
    <property type="gene designation" value="Tgfa"/>
</dbReference>
<dbReference type="VEuPathDB" id="HostDB:ENSMUSG00000029999"/>
<dbReference type="eggNOG" id="ENOG502RYAF">
    <property type="taxonomic scope" value="Eukaryota"/>
</dbReference>
<dbReference type="GeneTree" id="ENSGT00940000160058"/>
<dbReference type="HOGENOM" id="CLU_109645_1_0_1"/>
<dbReference type="InParanoid" id="P48030"/>
<dbReference type="OMA" id="HSGYIGA"/>
<dbReference type="OrthoDB" id="9946464at2759"/>
<dbReference type="PhylomeDB" id="P48030"/>
<dbReference type="TreeFam" id="TF332938"/>
<dbReference type="Reactome" id="R-MMU-1257604">
    <property type="pathway name" value="PIP3 activates AKT signaling"/>
</dbReference>
<dbReference type="Reactome" id="R-MMU-177929">
    <property type="pathway name" value="Signaling by EGFR"/>
</dbReference>
<dbReference type="Reactome" id="R-MMU-179812">
    <property type="pathway name" value="GRB2 events in EGFR signaling"/>
</dbReference>
<dbReference type="Reactome" id="R-MMU-180292">
    <property type="pathway name" value="GAB1 signalosome"/>
</dbReference>
<dbReference type="Reactome" id="R-MMU-180336">
    <property type="pathway name" value="SHC1 events in EGFR signaling"/>
</dbReference>
<dbReference type="Reactome" id="R-MMU-182971">
    <property type="pathway name" value="EGFR downregulation"/>
</dbReference>
<dbReference type="Reactome" id="R-MMU-204005">
    <property type="pathway name" value="COPII-mediated vesicle transport"/>
</dbReference>
<dbReference type="Reactome" id="R-MMU-212718">
    <property type="pathway name" value="EGFR interacts with phospholipase C-gamma"/>
</dbReference>
<dbReference type="Reactome" id="R-MMU-5673001">
    <property type="pathway name" value="RAF/MAP kinase cascade"/>
</dbReference>
<dbReference type="Reactome" id="R-MMU-5694530">
    <property type="pathway name" value="Cargo concentration in the ER"/>
</dbReference>
<dbReference type="Reactome" id="R-MMU-6811558">
    <property type="pathway name" value="PI5P, PP2A and IER3 Regulate PI3K/AKT Signaling"/>
</dbReference>
<dbReference type="Reactome" id="R-MMU-8856825">
    <property type="pathway name" value="Cargo recognition for clathrin-mediated endocytosis"/>
</dbReference>
<dbReference type="Reactome" id="R-MMU-8856828">
    <property type="pathway name" value="Clathrin-mediated endocytosis"/>
</dbReference>
<dbReference type="Reactome" id="R-MMU-9009391">
    <property type="pathway name" value="Extra-nuclear estrogen signaling"/>
</dbReference>
<dbReference type="BioGRID-ORCS" id="21802">
    <property type="hits" value="0 hits in 79 CRISPR screens"/>
</dbReference>
<dbReference type="ChiTaRS" id="Tgfa">
    <property type="organism name" value="mouse"/>
</dbReference>
<dbReference type="PRO" id="PR:P48030"/>
<dbReference type="Proteomes" id="UP000000589">
    <property type="component" value="Chromosome 6"/>
</dbReference>
<dbReference type="RNAct" id="P48030">
    <property type="molecule type" value="protein"/>
</dbReference>
<dbReference type="Bgee" id="ENSMUSG00000029999">
    <property type="expression patterns" value="Expressed in caudate-putamen and 237 other cell types or tissues"/>
</dbReference>
<dbReference type="ExpressionAtlas" id="P48030">
    <property type="expression patterns" value="baseline and differential"/>
</dbReference>
<dbReference type="GO" id="GO:0016323">
    <property type="term" value="C:basolateral plasma membrane"/>
    <property type="evidence" value="ECO:0007669"/>
    <property type="project" value="Ensembl"/>
</dbReference>
<dbReference type="GO" id="GO:0009986">
    <property type="term" value="C:cell surface"/>
    <property type="evidence" value="ECO:0007669"/>
    <property type="project" value="Ensembl"/>
</dbReference>
<dbReference type="GO" id="GO:0031410">
    <property type="term" value="C:cytoplasmic vesicle"/>
    <property type="evidence" value="ECO:0007669"/>
    <property type="project" value="Ensembl"/>
</dbReference>
<dbReference type="GO" id="GO:0005615">
    <property type="term" value="C:extracellular space"/>
    <property type="evidence" value="ECO:0000314"/>
    <property type="project" value="MGI"/>
</dbReference>
<dbReference type="GO" id="GO:0048471">
    <property type="term" value="C:perinuclear region of cytoplasm"/>
    <property type="evidence" value="ECO:0007669"/>
    <property type="project" value="Ensembl"/>
</dbReference>
<dbReference type="GO" id="GO:0005154">
    <property type="term" value="F:epidermal growth factor receptor binding"/>
    <property type="evidence" value="ECO:0000250"/>
    <property type="project" value="UniProtKB"/>
</dbReference>
<dbReference type="GO" id="GO:0008083">
    <property type="term" value="F:growth factor activity"/>
    <property type="evidence" value="ECO:0000250"/>
    <property type="project" value="HGNC-UCL"/>
</dbReference>
<dbReference type="GO" id="GO:0048018">
    <property type="term" value="F:receptor ligand activity"/>
    <property type="evidence" value="ECO:0000314"/>
    <property type="project" value="MGI"/>
</dbReference>
<dbReference type="GO" id="GO:0030297">
    <property type="term" value="F:transmembrane receptor protein tyrosine kinase activator activity"/>
    <property type="evidence" value="ECO:0000314"/>
    <property type="project" value="MGI"/>
</dbReference>
<dbReference type="GO" id="GO:0001525">
    <property type="term" value="P:angiogenesis"/>
    <property type="evidence" value="ECO:0000314"/>
    <property type="project" value="MGI"/>
</dbReference>
<dbReference type="GO" id="GO:0007166">
    <property type="term" value="P:cell surface receptor signaling pathway"/>
    <property type="evidence" value="ECO:0000250"/>
    <property type="project" value="HGNC-UCL"/>
</dbReference>
<dbReference type="GO" id="GO:0007173">
    <property type="term" value="P:epidermal growth factor receptor signaling pathway"/>
    <property type="evidence" value="ECO:0000314"/>
    <property type="project" value="MGI"/>
</dbReference>
<dbReference type="GO" id="GO:0038134">
    <property type="term" value="P:ERBB2-EGFR signaling pathway"/>
    <property type="evidence" value="ECO:0000266"/>
    <property type="project" value="MGI"/>
</dbReference>
<dbReference type="GO" id="GO:0072574">
    <property type="term" value="P:hepatocyte proliferation"/>
    <property type="evidence" value="ECO:0000314"/>
    <property type="project" value="UniProtKB"/>
</dbReference>
<dbReference type="GO" id="GO:0060749">
    <property type="term" value="P:mammary gland alveolus development"/>
    <property type="evidence" value="ECO:0000316"/>
    <property type="project" value="MGI"/>
</dbReference>
<dbReference type="GO" id="GO:0051781">
    <property type="term" value="P:positive regulation of cell division"/>
    <property type="evidence" value="ECO:0007669"/>
    <property type="project" value="UniProtKB-KW"/>
</dbReference>
<dbReference type="GO" id="GO:0008284">
    <property type="term" value="P:positive regulation of cell population proliferation"/>
    <property type="evidence" value="ECO:0000314"/>
    <property type="project" value="MGI"/>
</dbReference>
<dbReference type="GO" id="GO:0050679">
    <property type="term" value="P:positive regulation of epithelial cell proliferation"/>
    <property type="evidence" value="ECO:0000250"/>
    <property type="project" value="HGNC-UCL"/>
</dbReference>
<dbReference type="GO" id="GO:0043410">
    <property type="term" value="P:positive regulation of MAPK cascade"/>
    <property type="evidence" value="ECO:0000250"/>
    <property type="project" value="HGNC-UCL"/>
</dbReference>
<dbReference type="FunFam" id="2.10.25.10:FF:000182">
    <property type="entry name" value="Protransforming growth factor alpha"/>
    <property type="match status" value="1"/>
</dbReference>
<dbReference type="Gene3D" id="2.10.25.10">
    <property type="entry name" value="Laminin"/>
    <property type="match status" value="1"/>
</dbReference>
<dbReference type="InterPro" id="IPR000742">
    <property type="entry name" value="EGF-like_dom"/>
</dbReference>
<dbReference type="PANTHER" id="PTHR10740:SF1">
    <property type="entry name" value="PROTRANSFORMING GROWTH FACTOR ALPHA"/>
    <property type="match status" value="1"/>
</dbReference>
<dbReference type="PANTHER" id="PTHR10740">
    <property type="entry name" value="TRANSFORMING GROWTH FACTOR ALPHA"/>
    <property type="match status" value="1"/>
</dbReference>
<dbReference type="PRINTS" id="PR00009">
    <property type="entry name" value="EGFTGF"/>
</dbReference>
<dbReference type="SUPFAM" id="SSF57196">
    <property type="entry name" value="EGF/Laminin"/>
    <property type="match status" value="1"/>
</dbReference>
<dbReference type="PROSITE" id="PS00022">
    <property type="entry name" value="EGF_1"/>
    <property type="match status" value="1"/>
</dbReference>
<dbReference type="PROSITE" id="PS01186">
    <property type="entry name" value="EGF_2"/>
    <property type="match status" value="1"/>
</dbReference>
<dbReference type="PROSITE" id="PS50026">
    <property type="entry name" value="EGF_3"/>
    <property type="match status" value="1"/>
</dbReference>
<organism>
    <name type="scientific">Mus musculus</name>
    <name type="common">Mouse</name>
    <dbReference type="NCBI Taxonomy" id="10090"/>
    <lineage>
        <taxon>Eukaryota</taxon>
        <taxon>Metazoa</taxon>
        <taxon>Chordata</taxon>
        <taxon>Craniata</taxon>
        <taxon>Vertebrata</taxon>
        <taxon>Euteleostomi</taxon>
        <taxon>Mammalia</taxon>
        <taxon>Eutheria</taxon>
        <taxon>Euarchontoglires</taxon>
        <taxon>Glires</taxon>
        <taxon>Rodentia</taxon>
        <taxon>Myomorpha</taxon>
        <taxon>Muroidea</taxon>
        <taxon>Muridae</taxon>
        <taxon>Murinae</taxon>
        <taxon>Mus</taxon>
        <taxon>Mus</taxon>
    </lineage>
</organism>
<evidence type="ECO:0000250" key="1"/>
<evidence type="ECO:0000255" key="2"/>
<evidence type="ECO:0000255" key="3">
    <source>
        <dbReference type="PROSITE-ProRule" id="PRU00076"/>
    </source>
</evidence>
<evidence type="ECO:0000269" key="4">
    <source>
    </source>
</evidence>